<keyword id="KW-0963">Cytoplasm</keyword>
<keyword id="KW-0488">Methylation</keyword>
<keyword id="KW-0648">Protein biosynthesis</keyword>
<name>RF1_ACIBS</name>
<feature type="chain" id="PRO_1000093413" description="Peptide chain release factor 1">
    <location>
        <begin position="1"/>
        <end position="362"/>
    </location>
</feature>
<feature type="modified residue" description="N5-methylglutamine" evidence="1">
    <location>
        <position position="235"/>
    </location>
</feature>
<sequence length="362" mass="40585">MKASLRLRLDQLCDRHEELTALLADAEVISDNKRFRKLSREHSDLTEITEVWGKYRQAEEDIETAEMMKSDPDFKDMAEEEIQANKALLEELESQLNILMIPKDPNDSNAAYLEIRAGTGGDEAAIFSGDLFRMYSKYAESQGWRIEVLSENEGEHGGFKEVICRVDGDGVYGRLKFESGAHRVQRVPATESQGRVHTSACTVAILPEIDVDTNVEINPADLRIDTYRASGAGGQHINKTDSAVRITHIPTGTVVECQEERSQHKNKAKAMALLVSRLENAKRAAADAATSEMRRDLVGSGDRSERIRTYNYPQGRMTDHRINLTLYKLDAIMEGDLTELLDSLHREYQADQLAMLAQENGG</sequence>
<accession>B0VM26</accession>
<comment type="function">
    <text evidence="1">Peptide chain release factor 1 directs the termination of translation in response to the peptide chain termination codons UAG and UAA.</text>
</comment>
<comment type="subcellular location">
    <subcellularLocation>
        <location evidence="1">Cytoplasm</location>
    </subcellularLocation>
</comment>
<comment type="PTM">
    <text evidence="1">Methylated by PrmC. Methylation increases the termination efficiency of RF1.</text>
</comment>
<comment type="similarity">
    <text evidence="1">Belongs to the prokaryotic/mitochondrial release factor family.</text>
</comment>
<dbReference type="EMBL" id="CU468230">
    <property type="protein sequence ID" value="CAP00926.1"/>
    <property type="molecule type" value="Genomic_DNA"/>
</dbReference>
<dbReference type="SMR" id="B0VM26"/>
<dbReference type="KEGG" id="abm:ABSDF1586"/>
<dbReference type="HOGENOM" id="CLU_036856_0_1_6"/>
<dbReference type="Proteomes" id="UP000001741">
    <property type="component" value="Chromosome"/>
</dbReference>
<dbReference type="GO" id="GO:0005737">
    <property type="term" value="C:cytoplasm"/>
    <property type="evidence" value="ECO:0007669"/>
    <property type="project" value="UniProtKB-SubCell"/>
</dbReference>
<dbReference type="GO" id="GO:0016149">
    <property type="term" value="F:translation release factor activity, codon specific"/>
    <property type="evidence" value="ECO:0007669"/>
    <property type="project" value="UniProtKB-UniRule"/>
</dbReference>
<dbReference type="FunFam" id="3.30.160.20:FF:000004">
    <property type="entry name" value="Peptide chain release factor 1"/>
    <property type="match status" value="1"/>
</dbReference>
<dbReference type="FunFam" id="3.30.70.1660:FF:000002">
    <property type="entry name" value="Peptide chain release factor 1"/>
    <property type="match status" value="1"/>
</dbReference>
<dbReference type="FunFam" id="3.30.70.1660:FF:000004">
    <property type="entry name" value="Peptide chain release factor 1"/>
    <property type="match status" value="1"/>
</dbReference>
<dbReference type="Gene3D" id="3.30.160.20">
    <property type="match status" value="1"/>
</dbReference>
<dbReference type="Gene3D" id="3.30.70.1660">
    <property type="match status" value="1"/>
</dbReference>
<dbReference type="Gene3D" id="6.10.140.1950">
    <property type="match status" value="1"/>
</dbReference>
<dbReference type="HAMAP" id="MF_00093">
    <property type="entry name" value="Rel_fac_1"/>
    <property type="match status" value="1"/>
</dbReference>
<dbReference type="InterPro" id="IPR005139">
    <property type="entry name" value="PCRF"/>
</dbReference>
<dbReference type="InterPro" id="IPR000352">
    <property type="entry name" value="Pep_chain_release_fac_I"/>
</dbReference>
<dbReference type="InterPro" id="IPR045853">
    <property type="entry name" value="Pep_chain_release_fac_I_sf"/>
</dbReference>
<dbReference type="InterPro" id="IPR050057">
    <property type="entry name" value="Prokaryotic/Mito_RF"/>
</dbReference>
<dbReference type="InterPro" id="IPR004373">
    <property type="entry name" value="RF-1"/>
</dbReference>
<dbReference type="NCBIfam" id="TIGR00019">
    <property type="entry name" value="prfA"/>
    <property type="match status" value="1"/>
</dbReference>
<dbReference type="NCBIfam" id="NF001859">
    <property type="entry name" value="PRK00591.1"/>
    <property type="match status" value="1"/>
</dbReference>
<dbReference type="PANTHER" id="PTHR43804">
    <property type="entry name" value="LD18447P"/>
    <property type="match status" value="1"/>
</dbReference>
<dbReference type="PANTHER" id="PTHR43804:SF7">
    <property type="entry name" value="LD18447P"/>
    <property type="match status" value="1"/>
</dbReference>
<dbReference type="Pfam" id="PF03462">
    <property type="entry name" value="PCRF"/>
    <property type="match status" value="1"/>
</dbReference>
<dbReference type="Pfam" id="PF00472">
    <property type="entry name" value="RF-1"/>
    <property type="match status" value="1"/>
</dbReference>
<dbReference type="SMART" id="SM00937">
    <property type="entry name" value="PCRF"/>
    <property type="match status" value="1"/>
</dbReference>
<dbReference type="SUPFAM" id="SSF75620">
    <property type="entry name" value="Release factor"/>
    <property type="match status" value="1"/>
</dbReference>
<dbReference type="PROSITE" id="PS00745">
    <property type="entry name" value="RF_PROK_I"/>
    <property type="match status" value="1"/>
</dbReference>
<organism>
    <name type="scientific">Acinetobacter baumannii (strain SDF)</name>
    <dbReference type="NCBI Taxonomy" id="509170"/>
    <lineage>
        <taxon>Bacteria</taxon>
        <taxon>Pseudomonadati</taxon>
        <taxon>Pseudomonadota</taxon>
        <taxon>Gammaproteobacteria</taxon>
        <taxon>Moraxellales</taxon>
        <taxon>Moraxellaceae</taxon>
        <taxon>Acinetobacter</taxon>
        <taxon>Acinetobacter calcoaceticus/baumannii complex</taxon>
    </lineage>
</organism>
<gene>
    <name evidence="1" type="primary">prfA</name>
    <name type="ordered locus">ABSDF1586</name>
</gene>
<evidence type="ECO:0000255" key="1">
    <source>
        <dbReference type="HAMAP-Rule" id="MF_00093"/>
    </source>
</evidence>
<proteinExistence type="inferred from homology"/>
<reference key="1">
    <citation type="journal article" date="2008" name="PLoS ONE">
        <title>Comparative analysis of Acinetobacters: three genomes for three lifestyles.</title>
        <authorList>
            <person name="Vallenet D."/>
            <person name="Nordmann P."/>
            <person name="Barbe V."/>
            <person name="Poirel L."/>
            <person name="Mangenot S."/>
            <person name="Bataille E."/>
            <person name="Dossat C."/>
            <person name="Gas S."/>
            <person name="Kreimeyer A."/>
            <person name="Lenoble P."/>
            <person name="Oztas S."/>
            <person name="Poulain J."/>
            <person name="Segurens B."/>
            <person name="Robert C."/>
            <person name="Abergel C."/>
            <person name="Claverie J.-M."/>
            <person name="Raoult D."/>
            <person name="Medigue C."/>
            <person name="Weissenbach J."/>
            <person name="Cruveiller S."/>
        </authorList>
    </citation>
    <scope>NUCLEOTIDE SEQUENCE [LARGE SCALE GENOMIC DNA]</scope>
    <source>
        <strain>SDF</strain>
    </source>
</reference>
<protein>
    <recommendedName>
        <fullName evidence="1">Peptide chain release factor 1</fullName>
        <shortName evidence="1">RF-1</shortName>
    </recommendedName>
</protein>